<protein>
    <recommendedName>
        <fullName evidence="5">Late cornified envelope protein 3A</fullName>
    </recommendedName>
    <alternativeName>
        <fullName evidence="5">Late envelope protein 13</fullName>
    </alternativeName>
</protein>
<feature type="chain" id="PRO_0000235333" description="Late cornified envelope protein 3A">
    <location>
        <begin position="1"/>
        <end position="89"/>
    </location>
</feature>
<feature type="region of interest" description="Disordered" evidence="1">
    <location>
        <begin position="1"/>
        <end position="46"/>
    </location>
</feature>
<feature type="region of interest" description="Disordered" evidence="1">
    <location>
        <begin position="62"/>
        <end position="89"/>
    </location>
</feature>
<feature type="compositionally biased region" description="Low complexity" evidence="1">
    <location>
        <begin position="1"/>
        <end position="10"/>
    </location>
</feature>
<feature type="compositionally biased region" description="Low complexity" evidence="1">
    <location>
        <begin position="17"/>
        <end position="46"/>
    </location>
</feature>
<feature type="sequence variant" id="VAR_053484" description="In dbSNP:rs16834245.">
    <original>R</original>
    <variation>C</variation>
    <location>
        <position position="59"/>
    </location>
</feature>
<comment type="function">
    <text evidence="3 7">A structural component of the cornified envelope of the stratum corneum involved in innate cutaneous host defense (Probable). Possesses defensin-like antimicrobial activity against a broad spectrum of Gram-positive and Gram-negative bacteria, both aerobic and anaerobic species. Upon inflammation, may regulate skin barrier repair by shaping cutaneous microbiota composition and immune response to bacterial antigens (PubMed:28634035).</text>
</comment>
<comment type="subunit">
    <text evidence="4">Interacts with CYSRT1; the interaction is direct.</text>
</comment>
<comment type="interaction">
    <interactant intactId="EBI-9394625">
        <id>Q5TA76</id>
    </interactant>
    <interactant intactId="EBI-10173507">
        <id>Q6UY14-3</id>
        <label>ADAMTSL4</label>
    </interactant>
    <organismsDiffer>false</organismsDiffer>
    <experiments>3</experiments>
</comment>
<comment type="interaction">
    <interactant intactId="EBI-9394625">
        <id>Q5TA76</id>
    </interactant>
    <interactant intactId="EBI-1211484">
        <id>P05187</id>
        <label>ALPP</label>
    </interactant>
    <organismsDiffer>false</organismsDiffer>
    <experiments>5</experiments>
</comment>
<comment type="interaction">
    <interactant intactId="EBI-9394625">
        <id>Q5TA76</id>
    </interactant>
    <interactant intactId="EBI-741528">
        <id>Q9UKJ5</id>
        <label>CHIC2</label>
    </interactant>
    <organismsDiffer>false</organismsDiffer>
    <experiments>3</experiments>
</comment>
<comment type="interaction">
    <interactant intactId="EBI-9394625">
        <id>Q5TA76</id>
    </interactant>
    <interactant intactId="EBI-3867333">
        <id>A8MQ03</id>
        <label>CYSRT1</label>
    </interactant>
    <organismsDiffer>false</organismsDiffer>
    <experiments>9</experiments>
</comment>
<comment type="interaction">
    <interactant intactId="EBI-9394625">
        <id>Q5TA76</id>
    </interactant>
    <interactant intactId="EBI-536772">
        <id>Q12805</id>
        <label>EFEMP1</label>
    </interactant>
    <organismsDiffer>false</organismsDiffer>
    <experiments>3</experiments>
</comment>
<comment type="interaction">
    <interactant intactId="EBI-9394625">
        <id>Q5TA76</id>
    </interactant>
    <interactant intactId="EBI-743414">
        <id>O95967</id>
        <label>EFEMP2</label>
    </interactant>
    <organismsDiffer>false</organismsDiffer>
    <experiments>3</experiments>
</comment>
<comment type="interaction">
    <interactant intactId="EBI-9394625">
        <id>Q5TA76</id>
    </interactant>
    <interactant intactId="EBI-11956479">
        <id>P23142-4</id>
        <label>FBLN1</label>
    </interactant>
    <organismsDiffer>false</organismsDiffer>
    <experiments>3</experiments>
</comment>
<comment type="interaction">
    <interactant intactId="EBI-9394625">
        <id>Q5TA76</id>
    </interactant>
    <interactant intactId="EBI-11749135">
        <id>Q8IUG1</id>
        <label>KRTAP1-3</label>
    </interactant>
    <organismsDiffer>false</organismsDiffer>
    <experiments>5</experiments>
</comment>
<comment type="interaction">
    <interactant intactId="EBI-9394625">
        <id>Q5TA76</id>
    </interactant>
    <interactant intactId="EBI-11741292">
        <id>Q9BYS1</id>
        <label>KRTAP1-5</label>
    </interactant>
    <organismsDiffer>false</organismsDiffer>
    <experiments>4</experiments>
</comment>
<comment type="interaction">
    <interactant intactId="EBI-9394625">
        <id>Q5TA76</id>
    </interactant>
    <interactant intactId="EBI-10172290">
        <id>P60409</id>
        <label>KRTAP10-7</label>
    </interactant>
    <organismsDiffer>false</organismsDiffer>
    <experiments>3</experiments>
</comment>
<comment type="interaction">
    <interactant intactId="EBI-9394625">
        <id>Q5TA76</id>
    </interactant>
    <interactant intactId="EBI-10171774">
        <id>P60410</id>
        <label>KRTAP10-8</label>
    </interactant>
    <organismsDiffer>false</organismsDiffer>
    <experiments>5</experiments>
</comment>
<comment type="interaction">
    <interactant intactId="EBI-9394625">
        <id>Q5TA76</id>
    </interactant>
    <interactant intactId="EBI-10172052">
        <id>P60411</id>
        <label>KRTAP10-9</label>
    </interactant>
    <organismsDiffer>false</organismsDiffer>
    <experiments>5</experiments>
</comment>
<comment type="interaction">
    <interactant intactId="EBI-9394625">
        <id>Q5TA76</id>
    </interactant>
    <interactant intactId="EBI-1052037">
        <id>Q8IUC1</id>
        <label>KRTAP11-1</label>
    </interactant>
    <organismsDiffer>false</organismsDiffer>
    <experiments>3</experiments>
</comment>
<comment type="interaction">
    <interactant intactId="EBI-9394625">
        <id>Q5TA76</id>
    </interactant>
    <interactant intactId="EBI-11953334">
        <id>P60328</id>
        <label>KRTAP12-3</label>
    </interactant>
    <organismsDiffer>false</organismsDiffer>
    <experiments>6</experiments>
</comment>
<comment type="interaction">
    <interactant intactId="EBI-9394625">
        <id>Q5TA76</id>
    </interactant>
    <interactant intactId="EBI-10176396">
        <id>P60329</id>
        <label>KRTAP12-4</label>
    </interactant>
    <organismsDiffer>false</organismsDiffer>
    <experiments>3</experiments>
</comment>
<comment type="interaction">
    <interactant intactId="EBI-9394625">
        <id>Q5TA76</id>
    </interactant>
    <interactant intactId="EBI-11988175">
        <id>Q9BYP8</id>
        <label>KRTAP17-1</label>
    </interactant>
    <organismsDiffer>false</organismsDiffer>
    <experiments>5</experiments>
</comment>
<comment type="interaction">
    <interactant intactId="EBI-9394625">
        <id>Q5TA76</id>
    </interactant>
    <interactant intactId="EBI-14065470">
        <id>Q9BYR9</id>
        <label>KRTAP2-4</label>
    </interactant>
    <organismsDiffer>false</organismsDiffer>
    <experiments>3</experiments>
</comment>
<comment type="interaction">
    <interactant intactId="EBI-9394625">
        <id>Q5TA76</id>
    </interactant>
    <interactant intactId="EBI-9996449">
        <id>Q9BYR8</id>
        <label>KRTAP3-1</label>
    </interactant>
    <organismsDiffer>false</organismsDiffer>
    <experiments>3</experiments>
</comment>
<comment type="interaction">
    <interactant intactId="EBI-9394625">
        <id>Q5TA76</id>
    </interactant>
    <interactant intactId="EBI-751260">
        <id>Q9BYR7</id>
        <label>KRTAP3-2</label>
    </interactant>
    <organismsDiffer>false</organismsDiffer>
    <experiments>3</experiments>
</comment>
<comment type="interaction">
    <interactant intactId="EBI-9394625">
        <id>Q5TA76</id>
    </interactant>
    <interactant intactId="EBI-3957694">
        <id>Q9BYR6</id>
        <label>KRTAP3-3</label>
    </interactant>
    <organismsDiffer>false</organismsDiffer>
    <experiments>3</experiments>
</comment>
<comment type="interaction">
    <interactant intactId="EBI-9394625">
        <id>Q5TA76</id>
    </interactant>
    <interactant intactId="EBI-34579671">
        <id>Q9BYQ7</id>
        <label>KRTAP4-1</label>
    </interactant>
    <organismsDiffer>false</organismsDiffer>
    <experiments>3</experiments>
</comment>
<comment type="interaction">
    <interactant intactId="EBI-9394625">
        <id>Q5TA76</id>
    </interactant>
    <interactant intactId="EBI-10302392">
        <id>Q9BYQ6</id>
        <label>KRTAP4-11</label>
    </interactant>
    <organismsDiffer>false</organismsDiffer>
    <experiments>5</experiments>
</comment>
<comment type="interaction">
    <interactant intactId="EBI-9394625">
        <id>Q5TA76</id>
    </interactant>
    <interactant intactId="EBI-739863">
        <id>Q9BQ66</id>
        <label>KRTAP4-12</label>
    </interactant>
    <organismsDiffer>false</organismsDiffer>
    <experiments>8</experiments>
</comment>
<comment type="interaction">
    <interactant intactId="EBI-9394625">
        <id>Q5TA76</id>
    </interactant>
    <interactant intactId="EBI-10172511">
        <id>Q9BYR5</id>
        <label>KRTAP4-2</label>
    </interactant>
    <organismsDiffer>false</organismsDiffer>
    <experiments>4</experiments>
</comment>
<comment type="interaction">
    <interactant intactId="EBI-9394625">
        <id>Q5TA76</id>
    </interactant>
    <interactant intactId="EBI-11958132">
        <id>Q9BYR3</id>
        <label>KRTAP4-4</label>
    </interactant>
    <organismsDiffer>false</organismsDiffer>
    <experiments>5</experiments>
</comment>
<comment type="interaction">
    <interactant intactId="EBI-9394625">
        <id>Q5TA76</id>
    </interactant>
    <interactant intactId="EBI-11993254">
        <id>Q9BYR2</id>
        <label>KRTAP4-5</label>
    </interactant>
    <organismsDiffer>false</organismsDiffer>
    <experiments>5</experiments>
</comment>
<comment type="interaction">
    <interactant intactId="EBI-9394625">
        <id>Q5TA76</id>
    </interactant>
    <interactant intactId="EBI-11993296">
        <id>Q6L8G4</id>
        <label>KRTAP5-11</label>
    </interactant>
    <organismsDiffer>false</organismsDiffer>
    <experiments>3</experiments>
</comment>
<comment type="interaction">
    <interactant intactId="EBI-9394625">
        <id>Q5TA76</id>
    </interactant>
    <interactant intactId="EBI-11958178">
        <id>Q701N4</id>
        <label>KRTAP5-2</label>
    </interactant>
    <organismsDiffer>false</organismsDiffer>
    <experiments>3</experiments>
</comment>
<comment type="interaction">
    <interactant intactId="EBI-9394625">
        <id>Q5TA76</id>
    </interactant>
    <interactant intactId="EBI-11974251">
        <id>Q6L8H2</id>
        <label>KRTAP5-3</label>
    </interactant>
    <organismsDiffer>false</organismsDiffer>
    <experiments>3</experiments>
</comment>
<comment type="interaction">
    <interactant intactId="EBI-9394625">
        <id>Q5TA76</id>
    </interactant>
    <interactant intactId="EBI-11963072">
        <id>Q6L8H1</id>
        <label>KRTAP5-4</label>
    </interactant>
    <organismsDiffer>false</organismsDiffer>
    <experiments>5</experiments>
</comment>
<comment type="interaction">
    <interactant intactId="EBI-9394625">
        <id>Q5TA76</id>
    </interactant>
    <interactant intactId="EBI-10250562">
        <id>Q6L8G9</id>
        <label>KRTAP5-6</label>
    </interactant>
    <organismsDiffer>false</organismsDiffer>
    <experiments>6</experiments>
</comment>
<comment type="interaction">
    <interactant intactId="EBI-9394625">
        <id>Q5TA76</id>
    </interactant>
    <interactant intactId="EBI-11987425">
        <id>Q6L8G8</id>
        <label>KRTAP5-7</label>
    </interactant>
    <organismsDiffer>false</organismsDiffer>
    <experiments>3</experiments>
</comment>
<comment type="interaction">
    <interactant intactId="EBI-9394625">
        <id>Q5TA76</id>
    </interactant>
    <interactant intactId="EBI-3958099">
        <id>P26371</id>
        <label>KRTAP5-9</label>
    </interactant>
    <organismsDiffer>false</organismsDiffer>
    <experiments>6</experiments>
</comment>
<comment type="interaction">
    <interactant intactId="EBI-9394625">
        <id>Q5TA76</id>
    </interactant>
    <interactant intactId="EBI-22311199">
        <id>Q3LI67</id>
        <label>KRTAP6-3</label>
    </interactant>
    <organismsDiffer>false</organismsDiffer>
    <experiments>3</experiments>
</comment>
<comment type="interaction">
    <interactant intactId="EBI-9394625">
        <id>Q5TA76</id>
    </interactant>
    <interactant intactId="EBI-1044640">
        <id>Q9BYQ4</id>
        <label>KRTAP9-2</label>
    </interactant>
    <organismsDiffer>false</organismsDiffer>
    <experiments>8</experiments>
</comment>
<comment type="interaction">
    <interactant intactId="EBI-9394625">
        <id>Q5TA76</id>
    </interactant>
    <interactant intactId="EBI-1043191">
        <id>Q9BYQ3</id>
        <label>KRTAP9-3</label>
    </interactant>
    <organismsDiffer>false</organismsDiffer>
    <experiments>8</experiments>
</comment>
<comment type="interaction">
    <interactant intactId="EBI-9394625">
        <id>Q5TA76</id>
    </interactant>
    <interactant intactId="EBI-11958364">
        <id>Q9BYQ0</id>
        <label>KRTAP9-8</label>
    </interactant>
    <organismsDiffer>false</organismsDiffer>
    <experiments>5</experiments>
</comment>
<comment type="interaction">
    <interactant intactId="EBI-9394625">
        <id>Q5TA76</id>
    </interactant>
    <interactant intactId="EBI-12224199">
        <id>Q5T751</id>
        <label>LCE1C</label>
    </interactant>
    <organismsDiffer>false</organismsDiffer>
    <experiments>3</experiments>
</comment>
<comment type="interaction">
    <interactant intactId="EBI-9394625">
        <id>Q5TA76</id>
    </interactant>
    <interactant intactId="EBI-10246607">
        <id>Q5TA79</id>
        <label>LCE2A</label>
    </interactant>
    <organismsDiffer>false</organismsDiffer>
    <experiments>3</experiments>
</comment>
<comment type="interaction">
    <interactant intactId="EBI-9394625">
        <id>Q5TA76</id>
    </interactant>
    <interactant intactId="EBI-11478468">
        <id>O14633</id>
        <label>LCE2B</label>
    </interactant>
    <organismsDiffer>false</organismsDiffer>
    <experiments>3</experiments>
</comment>
<comment type="interaction">
    <interactant intactId="EBI-9394625">
        <id>Q5TA76</id>
    </interactant>
    <interactant intactId="EBI-11973993">
        <id>Q5TA81</id>
        <label>LCE2C</label>
    </interactant>
    <organismsDiffer>false</organismsDiffer>
    <experiments>3</experiments>
</comment>
<comment type="interaction">
    <interactant intactId="EBI-9394625">
        <id>Q5TA76</id>
    </interactant>
    <interactant intactId="EBI-11974495">
        <id>Q5TA77</id>
        <label>LCE3B</label>
    </interactant>
    <organismsDiffer>false</organismsDiffer>
    <experiments>3</experiments>
</comment>
<comment type="interaction">
    <interactant intactId="EBI-9394625">
        <id>Q5TA76</id>
    </interactant>
    <interactant intactId="EBI-11911016">
        <id>P80188</id>
        <label>LCN2</label>
    </interactant>
    <organismsDiffer>false</organismsDiffer>
    <experiments>3</experiments>
</comment>
<comment type="interaction">
    <interactant intactId="EBI-9394625">
        <id>Q5TA76</id>
    </interactant>
    <interactant intactId="EBI-2683507">
        <id>Q8N5G2</id>
        <label>MACO1</label>
    </interactant>
    <organismsDiffer>false</organismsDiffer>
    <experiments>3</experiments>
</comment>
<comment type="interaction">
    <interactant intactId="EBI-9394625">
        <id>Q5TA76</id>
    </interactant>
    <interactant intactId="EBI-724076">
        <id>Q99750</id>
        <label>MDFI</label>
    </interactant>
    <organismsDiffer>false</organismsDiffer>
    <experiments>5</experiments>
</comment>
<comment type="interaction">
    <interactant intactId="EBI-9394625">
        <id>Q5TA76</id>
    </interactant>
    <interactant intactId="EBI-7196415">
        <id>O96009</id>
        <label>NAPSA</label>
    </interactant>
    <organismsDiffer>false</organismsDiffer>
    <experiments>3</experiments>
</comment>
<comment type="interaction">
    <interactant intactId="EBI-9394625">
        <id>Q5TA76</id>
    </interactant>
    <interactant intactId="EBI-22310682">
        <id>P0DPK4</id>
        <label>NOTCH2NLC</label>
    </interactant>
    <organismsDiffer>false</organismsDiffer>
    <experiments>3</experiments>
</comment>
<comment type="interaction">
    <interactant intactId="EBI-9394625">
        <id>Q5TA76</id>
    </interactant>
    <interactant intactId="EBI-10277776">
        <id>Q8WWZ8</id>
        <label>OIT3</label>
    </interactant>
    <organismsDiffer>false</organismsDiffer>
    <experiments>3</experiments>
</comment>
<comment type="interaction">
    <interactant intactId="EBI-9394625">
        <id>Q5TA76</id>
    </interactant>
    <interactant intactId="EBI-3937430">
        <id>Q9NRY7</id>
        <label>PLSCR2</label>
    </interactant>
    <organismsDiffer>false</organismsDiffer>
    <experiments>3</experiments>
</comment>
<comment type="interaction">
    <interactant intactId="EBI-9394625">
        <id>Q5TA76</id>
    </interactant>
    <interactant intactId="EBI-3918154">
        <id>Q9UGC6</id>
        <label>RGS17</label>
    </interactant>
    <organismsDiffer>false</organismsDiffer>
    <experiments>3</experiments>
</comment>
<comment type="interaction">
    <interactant intactId="EBI-9394625">
        <id>Q5TA76</id>
    </interactant>
    <interactant intactId="EBI-10178530">
        <id>O76081-6</id>
        <label>RGS20</label>
    </interactant>
    <organismsDiffer>false</organismsDiffer>
    <experiments>3</experiments>
</comment>
<comment type="interaction">
    <interactant intactId="EBI-9394625">
        <id>Q5TA76</id>
    </interactant>
    <interactant intactId="EBI-750494">
        <id>P49901</id>
        <label>SMCP</label>
    </interactant>
    <organismsDiffer>false</organismsDiffer>
    <experiments>3</experiments>
</comment>
<comment type="interaction">
    <interactant intactId="EBI-9394625">
        <id>Q5TA76</id>
    </interactant>
    <interactant intactId="EBI-3866665">
        <id>O43609</id>
        <label>SPRY1</label>
    </interactant>
    <organismsDiffer>false</organismsDiffer>
    <experiments>6</experiments>
</comment>
<comment type="interaction">
    <interactant intactId="EBI-9394625">
        <id>Q5TA76</id>
    </interactant>
    <interactant intactId="EBI-12290641">
        <id>O43610</id>
        <label>SPRY3</label>
    </interactant>
    <organismsDiffer>false</organismsDiffer>
    <experiments>3</experiments>
</comment>
<comment type="interaction">
    <interactant intactId="EBI-9394625">
        <id>Q5TA76</id>
    </interactant>
    <interactant intactId="EBI-779636">
        <id>P01137</id>
        <label>TGFB1</label>
    </interactant>
    <organismsDiffer>false</organismsDiffer>
    <experiments>3</experiments>
</comment>
<comment type="interaction">
    <interactant intactId="EBI-9394625">
        <id>Q5TA76</id>
    </interactant>
    <interactant intactId="EBI-2562368">
        <id>P22735</id>
        <label>TGM1</label>
    </interactant>
    <organismsDiffer>false</organismsDiffer>
    <experiments>3</experiments>
</comment>
<comment type="interaction">
    <interactant intactId="EBI-9394625">
        <id>Q5TA76</id>
    </interactant>
    <interactant intactId="EBI-5235829">
        <id>Q8IWZ5</id>
        <label>TRIM42</label>
    </interactant>
    <organismsDiffer>false</organismsDiffer>
    <experiments>5</experiments>
</comment>
<comment type="interaction">
    <interactant intactId="EBI-9394625">
        <id>Q5TA76</id>
    </interactant>
    <interactant intactId="EBI-8652667">
        <id>O14817</id>
        <label>TSPAN4</label>
    </interactant>
    <organismsDiffer>false</organismsDiffer>
    <experiments>3</experiments>
</comment>
<comment type="interaction">
    <interactant intactId="EBI-9394625">
        <id>Q5TA76</id>
    </interactant>
    <interactant intactId="EBI-11957238">
        <id>Q2TAL6</id>
        <label>VWC2</label>
    </interactant>
    <organismsDiffer>false</organismsDiffer>
    <experiments>3</experiments>
</comment>
<comment type="interaction">
    <interactant intactId="EBI-9394625">
        <id>Q5TA76</id>
    </interactant>
    <interactant intactId="EBI-11747707">
        <id>B2RUY7</id>
        <label>VWC2L</label>
    </interactant>
    <organismsDiffer>false</organismsDiffer>
    <experiments>6</experiments>
</comment>
<comment type="tissue specificity">
    <text evidence="2">Skin-specific. Expression was readily detected in adult trunk skin, adult arm skin, fetal skin, penal skin, vulva, esophagus and tongue. Not expressed in the cervix, rectum, lung, colon, or placenta.</text>
</comment>
<comment type="induction">
    <text evidence="3">Induced upon stimulation with inflammatory cytokines produced by T-helper 1 cells (IL1A, TNF, IFNG) and T-helper 17 cells (IL17A, IL22).</text>
</comment>
<comment type="similarity">
    <text evidence="6">Belongs to the LCE family.</text>
</comment>
<name>LCE3A_HUMAN</name>
<gene>
    <name evidence="5 8" type="primary">LCE3A</name>
    <name evidence="5" type="synonym">LEP13</name>
</gene>
<evidence type="ECO:0000256" key="1">
    <source>
        <dbReference type="SAM" id="MobiDB-lite"/>
    </source>
</evidence>
<evidence type="ECO:0000269" key="2">
    <source>
    </source>
</evidence>
<evidence type="ECO:0000269" key="3">
    <source>
    </source>
</evidence>
<evidence type="ECO:0000269" key="4">
    <source>
    </source>
</evidence>
<evidence type="ECO:0000303" key="5">
    <source>
    </source>
</evidence>
<evidence type="ECO:0000305" key="6"/>
<evidence type="ECO:0000305" key="7">
    <source>
    </source>
</evidence>
<evidence type="ECO:0000312" key="8">
    <source>
        <dbReference type="HGNC" id="HGNC:29461"/>
    </source>
</evidence>
<sequence>MSCQQNQQQCQPPPKCPAKSPAQCLPPASSSCAPSSGGCGPSSERSCCLSHHRCRRSHRCRCQSSNSCDRGSGQQGGSSSCGHSSAGCC</sequence>
<keyword id="KW-0929">Antimicrobial</keyword>
<keyword id="KW-0417">Keratinization</keyword>
<keyword id="KW-1267">Proteomics identification</keyword>
<keyword id="KW-1185">Reference proteome</keyword>
<accession>Q5TA76</accession>
<organism>
    <name type="scientific">Homo sapiens</name>
    <name type="common">Human</name>
    <dbReference type="NCBI Taxonomy" id="9606"/>
    <lineage>
        <taxon>Eukaryota</taxon>
        <taxon>Metazoa</taxon>
        <taxon>Chordata</taxon>
        <taxon>Craniata</taxon>
        <taxon>Vertebrata</taxon>
        <taxon>Euteleostomi</taxon>
        <taxon>Mammalia</taxon>
        <taxon>Eutheria</taxon>
        <taxon>Euarchontoglires</taxon>
        <taxon>Primates</taxon>
        <taxon>Haplorrhini</taxon>
        <taxon>Catarrhini</taxon>
        <taxon>Hominidae</taxon>
        <taxon>Homo</taxon>
    </lineage>
</organism>
<dbReference type="EMBL" id="AL139247">
    <property type="status" value="NOT_ANNOTATED_CDS"/>
    <property type="molecule type" value="Genomic_DNA"/>
</dbReference>
<dbReference type="CCDS" id="CCDS1017.1"/>
<dbReference type="RefSeq" id="NP_848518.1">
    <property type="nucleotide sequence ID" value="NM_178431.1"/>
</dbReference>
<dbReference type="BioGRID" id="131648">
    <property type="interactions" value="75"/>
</dbReference>
<dbReference type="FunCoup" id="Q5TA76">
    <property type="interactions" value="32"/>
</dbReference>
<dbReference type="IntAct" id="Q5TA76">
    <property type="interactions" value="61"/>
</dbReference>
<dbReference type="STRING" id="9606.ENSP00000335006"/>
<dbReference type="iPTMnet" id="Q5TA76"/>
<dbReference type="PhosphoSitePlus" id="Q5TA76"/>
<dbReference type="BioMuta" id="LCE3A"/>
<dbReference type="DMDM" id="74745783"/>
<dbReference type="MassIVE" id="Q5TA76"/>
<dbReference type="PaxDb" id="9606-ENSP00000335006"/>
<dbReference type="PeptideAtlas" id="Q5TA76"/>
<dbReference type="DNASU" id="353142"/>
<dbReference type="Ensembl" id="ENST00000335674.1">
    <property type="protein sequence ID" value="ENSP00000335006.1"/>
    <property type="gene ID" value="ENSG00000185962.1"/>
</dbReference>
<dbReference type="GeneID" id="353142"/>
<dbReference type="KEGG" id="hsa:353142"/>
<dbReference type="MANE-Select" id="ENST00000335674.1">
    <property type="protein sequence ID" value="ENSP00000335006.1"/>
    <property type="RefSeq nucleotide sequence ID" value="NM_178431.1"/>
    <property type="RefSeq protein sequence ID" value="NP_848518.1"/>
</dbReference>
<dbReference type="UCSC" id="uc010pdt.2">
    <property type="organism name" value="human"/>
</dbReference>
<dbReference type="AGR" id="HGNC:29461"/>
<dbReference type="CTD" id="353142"/>
<dbReference type="DisGeNET" id="353142"/>
<dbReference type="GeneCards" id="LCE3A"/>
<dbReference type="HGNC" id="HGNC:29461">
    <property type="gene designation" value="LCE3A"/>
</dbReference>
<dbReference type="HPA" id="ENSG00000185962">
    <property type="expression patterns" value="Tissue enriched (lymphoid)"/>
</dbReference>
<dbReference type="MIM" id="612613">
    <property type="type" value="gene"/>
</dbReference>
<dbReference type="neXtProt" id="NX_Q5TA76"/>
<dbReference type="OpenTargets" id="ENSG00000185962"/>
<dbReference type="PharmGKB" id="PA134880553"/>
<dbReference type="VEuPathDB" id="HostDB:ENSG00000185962"/>
<dbReference type="eggNOG" id="ENOG502TDZ9">
    <property type="taxonomic scope" value="Eukaryota"/>
</dbReference>
<dbReference type="GeneTree" id="ENSGT00940000163498"/>
<dbReference type="HOGENOM" id="CLU_152038_1_0_1"/>
<dbReference type="InParanoid" id="Q5TA76"/>
<dbReference type="OMA" id="CHRSHRC"/>
<dbReference type="PAN-GO" id="Q5TA76">
    <property type="GO annotations" value="0 GO annotations based on evolutionary models"/>
</dbReference>
<dbReference type="PathwayCommons" id="Q5TA76"/>
<dbReference type="Reactome" id="R-HSA-6809371">
    <property type="pathway name" value="Formation of the cornified envelope"/>
</dbReference>
<dbReference type="SignaLink" id="Q5TA76"/>
<dbReference type="BioGRID-ORCS" id="353142">
    <property type="hits" value="18 hits in 1136 CRISPR screens"/>
</dbReference>
<dbReference type="GenomeRNAi" id="353142"/>
<dbReference type="Pharos" id="Q5TA76">
    <property type="development level" value="Tbio"/>
</dbReference>
<dbReference type="PRO" id="PR:Q5TA76"/>
<dbReference type="Proteomes" id="UP000005640">
    <property type="component" value="Chromosome 1"/>
</dbReference>
<dbReference type="RNAct" id="Q5TA76">
    <property type="molecule type" value="protein"/>
</dbReference>
<dbReference type="Bgee" id="ENSG00000185962">
    <property type="expression patterns" value="Expressed in male germ line stem cell (sensu Vertebrata) in testis and 46 other cell types or tissues"/>
</dbReference>
<dbReference type="GO" id="GO:0050829">
    <property type="term" value="P:defense response to Gram-negative bacterium"/>
    <property type="evidence" value="ECO:0000314"/>
    <property type="project" value="UniProtKB"/>
</dbReference>
<dbReference type="GO" id="GO:0050830">
    <property type="term" value="P:defense response to Gram-positive bacterium"/>
    <property type="evidence" value="ECO:0000314"/>
    <property type="project" value="UniProtKB"/>
</dbReference>
<dbReference type="GO" id="GO:0031424">
    <property type="term" value="P:keratinization"/>
    <property type="evidence" value="ECO:0007669"/>
    <property type="project" value="UniProtKB-KW"/>
</dbReference>
<dbReference type="GO" id="GO:0031640">
    <property type="term" value="P:killing of cells of another organism"/>
    <property type="evidence" value="ECO:0000314"/>
    <property type="project" value="UniProtKB"/>
</dbReference>
<dbReference type="InterPro" id="IPR028205">
    <property type="entry name" value="LCE"/>
</dbReference>
<dbReference type="Pfam" id="PF14672">
    <property type="entry name" value="LCE"/>
    <property type="match status" value="1"/>
</dbReference>
<proteinExistence type="evidence at protein level"/>
<reference key="1">
    <citation type="journal article" date="2006" name="Nature">
        <title>The DNA sequence and biological annotation of human chromosome 1.</title>
        <authorList>
            <person name="Gregory S.G."/>
            <person name="Barlow K.F."/>
            <person name="McLay K.E."/>
            <person name="Kaul R."/>
            <person name="Swarbreck D."/>
            <person name="Dunham A."/>
            <person name="Scott C.E."/>
            <person name="Howe K.L."/>
            <person name="Woodfine K."/>
            <person name="Spencer C.C.A."/>
            <person name="Jones M.C."/>
            <person name="Gillson C."/>
            <person name="Searle S."/>
            <person name="Zhou Y."/>
            <person name="Kokocinski F."/>
            <person name="McDonald L."/>
            <person name="Evans R."/>
            <person name="Phillips K."/>
            <person name="Atkinson A."/>
            <person name="Cooper R."/>
            <person name="Jones C."/>
            <person name="Hall R.E."/>
            <person name="Andrews T.D."/>
            <person name="Lloyd C."/>
            <person name="Ainscough R."/>
            <person name="Almeida J.P."/>
            <person name="Ambrose K.D."/>
            <person name="Anderson F."/>
            <person name="Andrew R.W."/>
            <person name="Ashwell R.I.S."/>
            <person name="Aubin K."/>
            <person name="Babbage A.K."/>
            <person name="Bagguley C.L."/>
            <person name="Bailey J."/>
            <person name="Beasley H."/>
            <person name="Bethel G."/>
            <person name="Bird C.P."/>
            <person name="Bray-Allen S."/>
            <person name="Brown J.Y."/>
            <person name="Brown A.J."/>
            <person name="Buckley D."/>
            <person name="Burton J."/>
            <person name="Bye J."/>
            <person name="Carder C."/>
            <person name="Chapman J.C."/>
            <person name="Clark S.Y."/>
            <person name="Clarke G."/>
            <person name="Clee C."/>
            <person name="Cobley V."/>
            <person name="Collier R.E."/>
            <person name="Corby N."/>
            <person name="Coville G.J."/>
            <person name="Davies J."/>
            <person name="Deadman R."/>
            <person name="Dunn M."/>
            <person name="Earthrowl M."/>
            <person name="Ellington A.G."/>
            <person name="Errington H."/>
            <person name="Frankish A."/>
            <person name="Frankland J."/>
            <person name="French L."/>
            <person name="Garner P."/>
            <person name="Garnett J."/>
            <person name="Gay L."/>
            <person name="Ghori M.R.J."/>
            <person name="Gibson R."/>
            <person name="Gilby L.M."/>
            <person name="Gillett W."/>
            <person name="Glithero R.J."/>
            <person name="Grafham D.V."/>
            <person name="Griffiths C."/>
            <person name="Griffiths-Jones S."/>
            <person name="Grocock R."/>
            <person name="Hammond S."/>
            <person name="Harrison E.S.I."/>
            <person name="Hart E."/>
            <person name="Haugen E."/>
            <person name="Heath P.D."/>
            <person name="Holmes S."/>
            <person name="Holt K."/>
            <person name="Howden P.J."/>
            <person name="Hunt A.R."/>
            <person name="Hunt S.E."/>
            <person name="Hunter G."/>
            <person name="Isherwood J."/>
            <person name="James R."/>
            <person name="Johnson C."/>
            <person name="Johnson D."/>
            <person name="Joy A."/>
            <person name="Kay M."/>
            <person name="Kershaw J.K."/>
            <person name="Kibukawa M."/>
            <person name="Kimberley A.M."/>
            <person name="King A."/>
            <person name="Knights A.J."/>
            <person name="Lad H."/>
            <person name="Laird G."/>
            <person name="Lawlor S."/>
            <person name="Leongamornlert D.A."/>
            <person name="Lloyd D.M."/>
            <person name="Loveland J."/>
            <person name="Lovell J."/>
            <person name="Lush M.J."/>
            <person name="Lyne R."/>
            <person name="Martin S."/>
            <person name="Mashreghi-Mohammadi M."/>
            <person name="Matthews L."/>
            <person name="Matthews N.S.W."/>
            <person name="McLaren S."/>
            <person name="Milne S."/>
            <person name="Mistry S."/>
            <person name="Moore M.J.F."/>
            <person name="Nickerson T."/>
            <person name="O'Dell C.N."/>
            <person name="Oliver K."/>
            <person name="Palmeiri A."/>
            <person name="Palmer S.A."/>
            <person name="Parker A."/>
            <person name="Patel D."/>
            <person name="Pearce A.V."/>
            <person name="Peck A.I."/>
            <person name="Pelan S."/>
            <person name="Phelps K."/>
            <person name="Phillimore B.J."/>
            <person name="Plumb R."/>
            <person name="Rajan J."/>
            <person name="Raymond C."/>
            <person name="Rouse G."/>
            <person name="Saenphimmachak C."/>
            <person name="Sehra H.K."/>
            <person name="Sheridan E."/>
            <person name="Shownkeen R."/>
            <person name="Sims S."/>
            <person name="Skuce C.D."/>
            <person name="Smith M."/>
            <person name="Steward C."/>
            <person name="Subramanian S."/>
            <person name="Sycamore N."/>
            <person name="Tracey A."/>
            <person name="Tromans A."/>
            <person name="Van Helmond Z."/>
            <person name="Wall M."/>
            <person name="Wallis J.M."/>
            <person name="White S."/>
            <person name="Whitehead S.L."/>
            <person name="Wilkinson J.E."/>
            <person name="Willey D.L."/>
            <person name="Williams H."/>
            <person name="Wilming L."/>
            <person name="Wray P.W."/>
            <person name="Wu Z."/>
            <person name="Coulson A."/>
            <person name="Vaudin M."/>
            <person name="Sulston J.E."/>
            <person name="Durbin R.M."/>
            <person name="Hubbard T."/>
            <person name="Wooster R."/>
            <person name="Dunham I."/>
            <person name="Carter N.P."/>
            <person name="McVean G."/>
            <person name="Ross M.T."/>
            <person name="Harrow J."/>
            <person name="Olson M.V."/>
            <person name="Beck S."/>
            <person name="Rogers J."/>
            <person name="Bentley D.R."/>
        </authorList>
    </citation>
    <scope>NUCLEOTIDE SEQUENCE [LARGE SCALE GENOMIC DNA]</scope>
</reference>
<reference key="2">
    <citation type="journal article" date="2005" name="J. Invest. Dermatol.">
        <title>Late cornified envelope family in differentiating epithelia -- response to calcium and ultraviolet irradiation.</title>
        <authorList>
            <person name="Jackson B."/>
            <person name="Tilli C.L."/>
            <person name="Hardman M."/>
            <person name="Avilion A."/>
            <person name="Macleod M."/>
            <person name="Ashcroft G."/>
            <person name="Byrne C."/>
        </authorList>
    </citation>
    <scope>NOMENCLATURE</scope>
    <scope>TISSUE SPECIFICITY</scope>
</reference>
<reference key="3">
    <citation type="journal article" date="2017" name="J. Invest. Dermatol.">
        <title>Psoriasis-Associated Late Cornified Envelope (LCE) Proteins Have Antibacterial Activity.</title>
        <authorList>
            <person name="Niehues H."/>
            <person name="Tsoi L.C."/>
            <person name="van der Krieken D.A."/>
            <person name="Jansen P.A.M."/>
            <person name="Oortveld M.A.W."/>
            <person name="Rodijk-Olthuis D."/>
            <person name="van Vlijmen I.M.J.J."/>
            <person name="Hendriks W.J.A.J."/>
            <person name="Helder R.W."/>
            <person name="Bouwstra J.A."/>
            <person name="van den Bogaard E.H."/>
            <person name="Stuart P.E."/>
            <person name="Nair R.P."/>
            <person name="Elder J.T."/>
            <person name="Zeeuwen P.L.J.M."/>
            <person name="Schalkwijk J."/>
        </authorList>
    </citation>
    <scope>FUNCTION</scope>
    <scope>INDUCTION</scope>
</reference>
<reference key="4">
    <citation type="journal article" date="2023" name="J. Invest. Dermatol.">
        <title>CYSRT1: An Antimicrobial Epidermal Protein that Can Interact with Late Cornified Envelope Proteins.</title>
        <authorList>
            <person name="Niehues H."/>
            <person name="Rikken G."/>
            <person name="Kersten F.F.J."/>
            <person name="Eeftens J.M."/>
            <person name="van Vlijmen-Willems I.M.J.J."/>
            <person name="Rodijk-Olthuis D."/>
            <person name="Jansen P.A.M."/>
            <person name="Hendriks W.J.A.J."/>
            <person name="Ederveen T.H.A."/>
            <person name="Schalkwijk J."/>
            <person name="van den Bogaard E.H."/>
            <person name="Zeeuwen P.L.J.M."/>
        </authorList>
    </citation>
    <scope>INTERACTION WITH CYSRT1</scope>
</reference>